<keyword id="KW-0963">Cytoplasm</keyword>
<keyword id="KW-0378">Hydrolase</keyword>
<keyword id="KW-0645">Protease</keyword>
<keyword id="KW-0720">Serine protease</keyword>
<name>CLPP2_BACC1</name>
<evidence type="ECO:0000255" key="1">
    <source>
        <dbReference type="HAMAP-Rule" id="MF_00444"/>
    </source>
</evidence>
<organism>
    <name type="scientific">Bacillus cereus (strain ATCC 10987 / NRS 248)</name>
    <dbReference type="NCBI Taxonomy" id="222523"/>
    <lineage>
        <taxon>Bacteria</taxon>
        <taxon>Bacillati</taxon>
        <taxon>Bacillota</taxon>
        <taxon>Bacilli</taxon>
        <taxon>Bacillales</taxon>
        <taxon>Bacillaceae</taxon>
        <taxon>Bacillus</taxon>
        <taxon>Bacillus cereus group</taxon>
    </lineage>
</organism>
<gene>
    <name evidence="1" type="primary">clpP2</name>
    <name type="ordered locus">BCE_5254</name>
</gene>
<dbReference type="EC" id="3.4.21.92" evidence="1"/>
<dbReference type="EMBL" id="AE017194">
    <property type="protein sequence ID" value="AAS44155.1"/>
    <property type="molecule type" value="Genomic_DNA"/>
</dbReference>
<dbReference type="SMR" id="Q72XW9"/>
<dbReference type="MEROPS" id="S14.001"/>
<dbReference type="KEGG" id="bca:BCE_5254"/>
<dbReference type="HOGENOM" id="CLU_058707_3_2_9"/>
<dbReference type="Proteomes" id="UP000002527">
    <property type="component" value="Chromosome"/>
</dbReference>
<dbReference type="GO" id="GO:0005737">
    <property type="term" value="C:cytoplasm"/>
    <property type="evidence" value="ECO:0007669"/>
    <property type="project" value="UniProtKB-SubCell"/>
</dbReference>
<dbReference type="GO" id="GO:0009368">
    <property type="term" value="C:endopeptidase Clp complex"/>
    <property type="evidence" value="ECO:0007669"/>
    <property type="project" value="TreeGrafter"/>
</dbReference>
<dbReference type="GO" id="GO:0004176">
    <property type="term" value="F:ATP-dependent peptidase activity"/>
    <property type="evidence" value="ECO:0007669"/>
    <property type="project" value="InterPro"/>
</dbReference>
<dbReference type="GO" id="GO:0051117">
    <property type="term" value="F:ATPase binding"/>
    <property type="evidence" value="ECO:0007669"/>
    <property type="project" value="TreeGrafter"/>
</dbReference>
<dbReference type="GO" id="GO:0004252">
    <property type="term" value="F:serine-type endopeptidase activity"/>
    <property type="evidence" value="ECO:0007669"/>
    <property type="project" value="UniProtKB-UniRule"/>
</dbReference>
<dbReference type="GO" id="GO:0006515">
    <property type="term" value="P:protein quality control for misfolded or incompletely synthesized proteins"/>
    <property type="evidence" value="ECO:0007669"/>
    <property type="project" value="TreeGrafter"/>
</dbReference>
<dbReference type="CDD" id="cd07017">
    <property type="entry name" value="S14_ClpP_2"/>
    <property type="match status" value="1"/>
</dbReference>
<dbReference type="FunFam" id="3.90.226.10:FF:000001">
    <property type="entry name" value="ATP-dependent Clp protease proteolytic subunit"/>
    <property type="match status" value="1"/>
</dbReference>
<dbReference type="Gene3D" id="3.90.226.10">
    <property type="entry name" value="2-enoyl-CoA Hydratase, Chain A, domain 1"/>
    <property type="match status" value="1"/>
</dbReference>
<dbReference type="HAMAP" id="MF_00444">
    <property type="entry name" value="ClpP"/>
    <property type="match status" value="1"/>
</dbReference>
<dbReference type="InterPro" id="IPR001907">
    <property type="entry name" value="ClpP"/>
</dbReference>
<dbReference type="InterPro" id="IPR029045">
    <property type="entry name" value="ClpP/crotonase-like_dom_sf"/>
</dbReference>
<dbReference type="InterPro" id="IPR023562">
    <property type="entry name" value="ClpP/TepA"/>
</dbReference>
<dbReference type="InterPro" id="IPR033135">
    <property type="entry name" value="ClpP_His_AS"/>
</dbReference>
<dbReference type="InterPro" id="IPR018215">
    <property type="entry name" value="ClpP_Ser_AS"/>
</dbReference>
<dbReference type="NCBIfam" id="TIGR00493">
    <property type="entry name" value="clpP"/>
    <property type="match status" value="1"/>
</dbReference>
<dbReference type="NCBIfam" id="NF001368">
    <property type="entry name" value="PRK00277.1"/>
    <property type="match status" value="1"/>
</dbReference>
<dbReference type="NCBIfam" id="NF009205">
    <property type="entry name" value="PRK12553.1"/>
    <property type="match status" value="1"/>
</dbReference>
<dbReference type="PANTHER" id="PTHR10381">
    <property type="entry name" value="ATP-DEPENDENT CLP PROTEASE PROTEOLYTIC SUBUNIT"/>
    <property type="match status" value="1"/>
</dbReference>
<dbReference type="PANTHER" id="PTHR10381:SF70">
    <property type="entry name" value="ATP-DEPENDENT CLP PROTEASE PROTEOLYTIC SUBUNIT"/>
    <property type="match status" value="1"/>
</dbReference>
<dbReference type="Pfam" id="PF00574">
    <property type="entry name" value="CLP_protease"/>
    <property type="match status" value="1"/>
</dbReference>
<dbReference type="PRINTS" id="PR00127">
    <property type="entry name" value="CLPPROTEASEP"/>
</dbReference>
<dbReference type="SUPFAM" id="SSF52096">
    <property type="entry name" value="ClpP/crotonase"/>
    <property type="match status" value="1"/>
</dbReference>
<dbReference type="PROSITE" id="PS00382">
    <property type="entry name" value="CLP_PROTEASE_HIS"/>
    <property type="match status" value="1"/>
</dbReference>
<dbReference type="PROSITE" id="PS00381">
    <property type="entry name" value="CLP_PROTEASE_SER"/>
    <property type="match status" value="1"/>
</dbReference>
<comment type="function">
    <text evidence="1">Cleaves peptides in various proteins in a process that requires ATP hydrolysis. Has a chymotrypsin-like activity. Plays a major role in the degradation of misfolded proteins.</text>
</comment>
<comment type="catalytic activity">
    <reaction evidence="1">
        <text>Hydrolysis of proteins to small peptides in the presence of ATP and magnesium. alpha-casein is the usual test substrate. In the absence of ATP, only oligopeptides shorter than five residues are hydrolyzed (such as succinyl-Leu-Tyr-|-NHMec, and Leu-Tyr-Leu-|-Tyr-Trp, in which cleavage of the -Tyr-|-Leu- and -Tyr-|-Trp bonds also occurs).</text>
        <dbReference type="EC" id="3.4.21.92"/>
    </reaction>
</comment>
<comment type="subunit">
    <text evidence="1">Fourteen ClpP subunits assemble into 2 heptameric rings which stack back to back to give a disk-like structure with a central cavity, resembling the structure of eukaryotic proteasomes.</text>
</comment>
<comment type="subcellular location">
    <subcellularLocation>
        <location evidence="1">Cytoplasm</location>
    </subcellularLocation>
</comment>
<comment type="similarity">
    <text evidence="1">Belongs to the peptidase S14 family.</text>
</comment>
<feature type="chain" id="PRO_0000179487" description="ATP-dependent Clp protease proteolytic subunit 2">
    <location>
        <begin position="1"/>
        <end position="193"/>
    </location>
</feature>
<feature type="active site" description="Nucleophile" evidence="1">
    <location>
        <position position="98"/>
    </location>
</feature>
<feature type="active site" evidence="1">
    <location>
        <position position="123"/>
    </location>
</feature>
<reference key="1">
    <citation type="journal article" date="2004" name="Nucleic Acids Res.">
        <title>The genome sequence of Bacillus cereus ATCC 10987 reveals metabolic adaptations and a large plasmid related to Bacillus anthracis pXO1.</title>
        <authorList>
            <person name="Rasko D.A."/>
            <person name="Ravel J."/>
            <person name="Oekstad O.A."/>
            <person name="Helgason E."/>
            <person name="Cer R.Z."/>
            <person name="Jiang L."/>
            <person name="Shores K.A."/>
            <person name="Fouts D.E."/>
            <person name="Tourasse N.J."/>
            <person name="Angiuoli S.V."/>
            <person name="Kolonay J.F."/>
            <person name="Nelson W.C."/>
            <person name="Kolstoe A.-B."/>
            <person name="Fraser C.M."/>
            <person name="Read T.D."/>
        </authorList>
    </citation>
    <scope>NUCLEOTIDE SEQUENCE [LARGE SCALE GENOMIC DNA]</scope>
    <source>
        <strain>ATCC 10987 / NRS 248</strain>
    </source>
</reference>
<protein>
    <recommendedName>
        <fullName evidence="1">ATP-dependent Clp protease proteolytic subunit 2</fullName>
        <ecNumber evidence="1">3.4.21.92</ecNumber>
    </recommendedName>
    <alternativeName>
        <fullName evidence="1">Endopeptidase Clp 2</fullName>
    </alternativeName>
</protein>
<sequence>MNLIPTVIEQTNRGERAYDIYSRLLKDRIIMLGSAIDDNVANSIVSQLLFLESQDPDKDIHLYINSPGGSITAGMAIYDTMQFIKPQVSTICIGMAASMGAFLLAAGEKGKRYALPNSEVMIHQPLGGAQGQATEIEIAAKRILFLREKLNQILADRTGQPLEVLQRDTDRDNFMTAEKALEYGLIDKIFTNR</sequence>
<accession>Q72XW9</accession>
<proteinExistence type="inferred from homology"/>